<gene>
    <name type="primary">rpl28</name>
</gene>
<protein>
    <recommendedName>
        <fullName evidence="2">Large ribosomal subunit protein eL28</fullName>
    </recommendedName>
    <alternativeName>
        <fullName>60S ribosomal protein L28</fullName>
    </alternativeName>
</protein>
<proteinExistence type="evidence at transcript level"/>
<name>RL28_XENLA</name>
<organism>
    <name type="scientific">Xenopus laevis</name>
    <name type="common">African clawed frog</name>
    <dbReference type="NCBI Taxonomy" id="8355"/>
    <lineage>
        <taxon>Eukaryota</taxon>
        <taxon>Metazoa</taxon>
        <taxon>Chordata</taxon>
        <taxon>Craniata</taxon>
        <taxon>Vertebrata</taxon>
        <taxon>Euteleostomi</taxon>
        <taxon>Amphibia</taxon>
        <taxon>Batrachia</taxon>
        <taxon>Anura</taxon>
        <taxon>Pipoidea</taxon>
        <taxon>Pipidae</taxon>
        <taxon>Xenopodinae</taxon>
        <taxon>Xenopus</taxon>
        <taxon>Xenopus</taxon>
    </lineage>
</organism>
<sequence length="33" mass="3907">ATSYEKITINKNSRSTLSSVRHIIRKNNYRKDL</sequence>
<keyword id="KW-0963">Cytoplasm</keyword>
<keyword id="KW-1185">Reference proteome</keyword>
<keyword id="KW-0687">Ribonucleoprotein</keyword>
<keyword id="KW-0689">Ribosomal protein</keyword>
<feature type="chain" id="PRO_0000122392" description="Large ribosomal subunit protein eL28">
    <location>
        <begin position="1" status="less than"/>
        <end position="33" status="greater than"/>
    </location>
</feature>
<feature type="non-terminal residue">
    <location>
        <position position="1"/>
    </location>
</feature>
<feature type="non-terminal residue">
    <location>
        <position position="33"/>
    </location>
</feature>
<comment type="function">
    <text evidence="1">Component of the large ribosomal subunit. The ribosome is a large ribonucleoprotein complex responsible for the synthesis of proteins in the cell.</text>
</comment>
<comment type="subunit">
    <text evidence="1">Component of the large ribosomal subunit.</text>
</comment>
<comment type="subcellular location">
    <subcellularLocation>
        <location evidence="1">Cytoplasm</location>
    </subcellularLocation>
</comment>
<comment type="similarity">
    <text evidence="2">Belongs to the eukaryotic ribosomal protein eL28 family.</text>
</comment>
<reference key="1">
    <citation type="journal article" date="1992" name="Nucleic Acids Res.">
        <title>Analysis of mRNAs under translational control during Xenopus embryogenesis: isolation of new ribosomal protein clones.</title>
        <authorList>
            <person name="Loreni F."/>
            <person name="Francesconi A."/>
            <person name="Jappelli R."/>
            <person name="Amaldi F."/>
        </authorList>
    </citation>
    <scope>NUCLEOTIDE SEQUENCE [MRNA]</scope>
</reference>
<dbReference type="EMBL" id="X64209">
    <property type="protein sequence ID" value="CAB56812.1"/>
    <property type="molecule type" value="mRNA"/>
</dbReference>
<dbReference type="PIR" id="S22605">
    <property type="entry name" value="S22605"/>
</dbReference>
<dbReference type="SMR" id="P46780"/>
<dbReference type="AGR" id="Xenbase:XB-GENE-6255818"/>
<dbReference type="Xenbase" id="XB-GENE-6255818">
    <property type="gene designation" value="rpl28.L"/>
</dbReference>
<dbReference type="CD-CODE" id="78E86D56">
    <property type="entry name" value="Mitochondrial cloud"/>
</dbReference>
<dbReference type="Proteomes" id="UP000186698">
    <property type="component" value="Unplaced"/>
</dbReference>
<dbReference type="GO" id="GO:0005737">
    <property type="term" value="C:cytoplasm"/>
    <property type="evidence" value="ECO:0007669"/>
    <property type="project" value="UniProtKB-SubCell"/>
</dbReference>
<dbReference type="GO" id="GO:1990904">
    <property type="term" value="C:ribonucleoprotein complex"/>
    <property type="evidence" value="ECO:0007669"/>
    <property type="project" value="UniProtKB-KW"/>
</dbReference>
<dbReference type="GO" id="GO:0005840">
    <property type="term" value="C:ribosome"/>
    <property type="evidence" value="ECO:0007669"/>
    <property type="project" value="UniProtKB-KW"/>
</dbReference>
<dbReference type="Gene3D" id="3.30.390.110">
    <property type="match status" value="1"/>
</dbReference>
<evidence type="ECO:0000250" key="1">
    <source>
        <dbReference type="UniProtKB" id="P46779"/>
    </source>
</evidence>
<evidence type="ECO:0000305" key="2"/>
<accession>P46780</accession>